<name>MLX_HUMAN</name>
<sequence>MTEPGASPEDPWVKASPVGAHAGEGRAGRARARRGAGRRGASLLSPKSPTLSVPRGCREDSSHPACAKVEYAYSDNSLDPGLFVESTRKGSVVSRANSIGSTSASSVPNTDDEDSDYHQEAYKESYKDRRRRAHTQAEQKRRDAIKRGYDDLQTIVPTCQQQDFSIGSQKLSKAIVLQKTIDYIQFLHKEKKKQEEEVSTLRKDVTALKIMKVNYEQIVKAHQDNPHEGEDQVSDQVKFNVFQGIMDSLFQSFNASISVASFQELSACVFSWIEEHCKPQTLREIVIGVLHQLKNQLY</sequence>
<keyword id="KW-0010">Activator</keyword>
<keyword id="KW-0025">Alternative splicing</keyword>
<keyword id="KW-0963">Cytoplasm</keyword>
<keyword id="KW-0238">DNA-binding</keyword>
<keyword id="KW-0539">Nucleus</keyword>
<keyword id="KW-0597">Phosphoprotein</keyword>
<keyword id="KW-1267">Proteomics identification</keyword>
<keyword id="KW-1185">Reference proteome</keyword>
<keyword id="KW-0678">Repressor</keyword>
<keyword id="KW-0804">Transcription</keyword>
<keyword id="KW-0805">Transcription regulation</keyword>
<reference key="1">
    <citation type="journal article" date="1999" name="J. Biol. Chem.">
        <title>Mlx, a novel Max-like bHLHZip protein that interacts with the Max network of transcription factors.</title>
        <authorList>
            <person name="Billin A.N."/>
            <person name="Eilers A.L."/>
            <person name="Queva C."/>
            <person name="Ayer D.E."/>
        </authorList>
    </citation>
    <scope>NUCLEOTIDE SEQUENCE [MRNA] (ISOFORM BETA)</scope>
    <scope>FUNCTION</scope>
    <scope>SUBUNIT</scope>
    <scope>TISSUE SPECIFICITY</scope>
    <source>
        <tissue>Promyelocyte</tissue>
    </source>
</reference>
<reference key="2">
    <citation type="journal article" date="2000" name="Oncogene">
        <title>Mlx, a new Max-like bHLHZip family member: the center stage of a novel transcription factors regulatory pathway?</title>
        <authorList>
            <person name="Meroni G."/>
            <person name="Cairo S."/>
            <person name="Merla G."/>
            <person name="Messali S."/>
            <person name="Brent R."/>
            <person name="Ballabio A."/>
            <person name="Reymond A."/>
        </authorList>
    </citation>
    <scope>NUCLEOTIDE SEQUENCE [MRNA] (ISOFORMS ALPHA; BETA AND GAMMA)</scope>
    <scope>SUBCELLULAR LOCATION</scope>
</reference>
<reference key="3">
    <citation type="journal article" date="2004" name="Nat. Genet.">
        <title>Complete sequencing and characterization of 21,243 full-length human cDNAs.</title>
        <authorList>
            <person name="Ota T."/>
            <person name="Suzuki Y."/>
            <person name="Nishikawa T."/>
            <person name="Otsuki T."/>
            <person name="Sugiyama T."/>
            <person name="Irie R."/>
            <person name="Wakamatsu A."/>
            <person name="Hayashi K."/>
            <person name="Sato H."/>
            <person name="Nagai K."/>
            <person name="Kimura K."/>
            <person name="Makita H."/>
            <person name="Sekine M."/>
            <person name="Obayashi M."/>
            <person name="Nishi T."/>
            <person name="Shibahara T."/>
            <person name="Tanaka T."/>
            <person name="Ishii S."/>
            <person name="Yamamoto J."/>
            <person name="Saito K."/>
            <person name="Kawai Y."/>
            <person name="Isono Y."/>
            <person name="Nakamura Y."/>
            <person name="Nagahari K."/>
            <person name="Murakami K."/>
            <person name="Yasuda T."/>
            <person name="Iwayanagi T."/>
            <person name="Wagatsuma M."/>
            <person name="Shiratori A."/>
            <person name="Sudo H."/>
            <person name="Hosoiri T."/>
            <person name="Kaku Y."/>
            <person name="Kodaira H."/>
            <person name="Kondo H."/>
            <person name="Sugawara M."/>
            <person name="Takahashi M."/>
            <person name="Kanda K."/>
            <person name="Yokoi T."/>
            <person name="Furuya T."/>
            <person name="Kikkawa E."/>
            <person name="Omura Y."/>
            <person name="Abe K."/>
            <person name="Kamihara K."/>
            <person name="Katsuta N."/>
            <person name="Sato K."/>
            <person name="Tanikawa M."/>
            <person name="Yamazaki M."/>
            <person name="Ninomiya K."/>
            <person name="Ishibashi T."/>
            <person name="Yamashita H."/>
            <person name="Murakawa K."/>
            <person name="Fujimori K."/>
            <person name="Tanai H."/>
            <person name="Kimata M."/>
            <person name="Watanabe M."/>
            <person name="Hiraoka S."/>
            <person name="Chiba Y."/>
            <person name="Ishida S."/>
            <person name="Ono Y."/>
            <person name="Takiguchi S."/>
            <person name="Watanabe S."/>
            <person name="Yosida M."/>
            <person name="Hotuta T."/>
            <person name="Kusano J."/>
            <person name="Kanehori K."/>
            <person name="Takahashi-Fujii A."/>
            <person name="Hara H."/>
            <person name="Tanase T.-O."/>
            <person name="Nomura Y."/>
            <person name="Togiya S."/>
            <person name="Komai F."/>
            <person name="Hara R."/>
            <person name="Takeuchi K."/>
            <person name="Arita M."/>
            <person name="Imose N."/>
            <person name="Musashino K."/>
            <person name="Yuuki H."/>
            <person name="Oshima A."/>
            <person name="Sasaki N."/>
            <person name="Aotsuka S."/>
            <person name="Yoshikawa Y."/>
            <person name="Matsunawa H."/>
            <person name="Ichihara T."/>
            <person name="Shiohata N."/>
            <person name="Sano S."/>
            <person name="Moriya S."/>
            <person name="Momiyama H."/>
            <person name="Satoh N."/>
            <person name="Takami S."/>
            <person name="Terashima Y."/>
            <person name="Suzuki O."/>
            <person name="Nakagawa S."/>
            <person name="Senoh A."/>
            <person name="Mizoguchi H."/>
            <person name="Goto Y."/>
            <person name="Shimizu F."/>
            <person name="Wakebe H."/>
            <person name="Hishigaki H."/>
            <person name="Watanabe T."/>
            <person name="Sugiyama A."/>
            <person name="Takemoto M."/>
            <person name="Kawakami B."/>
            <person name="Yamazaki M."/>
            <person name="Watanabe K."/>
            <person name="Kumagai A."/>
            <person name="Itakura S."/>
            <person name="Fukuzumi Y."/>
            <person name="Fujimori Y."/>
            <person name="Komiyama M."/>
            <person name="Tashiro H."/>
            <person name="Tanigami A."/>
            <person name="Fujiwara T."/>
            <person name="Ono T."/>
            <person name="Yamada K."/>
            <person name="Fujii Y."/>
            <person name="Ozaki K."/>
            <person name="Hirao M."/>
            <person name="Ohmori Y."/>
            <person name="Kawabata A."/>
            <person name="Hikiji T."/>
            <person name="Kobatake N."/>
            <person name="Inagaki H."/>
            <person name="Ikema Y."/>
            <person name="Okamoto S."/>
            <person name="Okitani R."/>
            <person name="Kawakami T."/>
            <person name="Noguchi S."/>
            <person name="Itoh T."/>
            <person name="Shigeta K."/>
            <person name="Senba T."/>
            <person name="Matsumura K."/>
            <person name="Nakajima Y."/>
            <person name="Mizuno T."/>
            <person name="Morinaga M."/>
            <person name="Sasaki M."/>
            <person name="Togashi T."/>
            <person name="Oyama M."/>
            <person name="Hata H."/>
            <person name="Watanabe M."/>
            <person name="Komatsu T."/>
            <person name="Mizushima-Sugano J."/>
            <person name="Satoh T."/>
            <person name="Shirai Y."/>
            <person name="Takahashi Y."/>
            <person name="Nakagawa K."/>
            <person name="Okumura K."/>
            <person name="Nagase T."/>
            <person name="Nomura N."/>
            <person name="Kikuchi H."/>
            <person name="Masuho Y."/>
            <person name="Yamashita R."/>
            <person name="Nakai K."/>
            <person name="Yada T."/>
            <person name="Nakamura Y."/>
            <person name="Ohara O."/>
            <person name="Isogai T."/>
            <person name="Sugano S."/>
        </authorList>
    </citation>
    <scope>NUCLEOTIDE SEQUENCE [LARGE SCALE MRNA] (ISOFORMS ALPHA; BETA AND GAMMA)</scope>
    <source>
        <tissue>Brain</tissue>
        <tissue>Colon</tissue>
    </source>
</reference>
<reference key="4">
    <citation type="submission" date="2003-08" db="EMBL/GenBank/DDBJ databases">
        <title>Cloning of human full-length CDSs in BD Creator(TM) system donor vector.</title>
        <authorList>
            <person name="Kalnine N."/>
            <person name="Chen X."/>
            <person name="Rolfs A."/>
            <person name="Halleck A."/>
            <person name="Hines L."/>
            <person name="Eisenstein S."/>
            <person name="Koundinya M."/>
            <person name="Raphael J."/>
            <person name="Moreira D."/>
            <person name="Kelley T."/>
            <person name="LaBaer J."/>
            <person name="Lin Y."/>
            <person name="Phelan M."/>
            <person name="Farmer A."/>
        </authorList>
    </citation>
    <scope>NUCLEOTIDE SEQUENCE [LARGE SCALE MRNA] (ISOFORM BETA)</scope>
</reference>
<reference key="5">
    <citation type="journal article" date="2004" name="Genome Res.">
        <title>The status, quality, and expansion of the NIH full-length cDNA project: the Mammalian Gene Collection (MGC).</title>
        <authorList>
            <consortium name="The MGC Project Team"/>
        </authorList>
    </citation>
    <scope>NUCLEOTIDE SEQUENCE [LARGE SCALE MRNA] (ISOFORM BETA)</scope>
    <source>
        <tissue>Eye</tissue>
    </source>
</reference>
<reference key="6">
    <citation type="journal article" date="2002" name="Mol. Cell. Biol.">
        <title>A novel heterodimerization domain, CRM1, and 14-3-3 control subcellular localization of the MondoA-Mlx heterocomplex.</title>
        <authorList>
            <person name="Eilers A.L."/>
            <person name="Sundwall E."/>
            <person name="Lin M."/>
            <person name="Sullivan A.A."/>
            <person name="Ayer D.E."/>
        </authorList>
    </citation>
    <scope>FUNCTION</scope>
    <scope>INTERACTION WITH MLXIP</scope>
</reference>
<reference key="7">
    <citation type="journal article" date="2006" name="Mol. Cell. Biol.">
        <title>MondoA-Mlx heterodimers are candidate sensors of cellular energy status: mitochondrial localization and direct regulation of glycolysis.</title>
        <authorList>
            <person name="Sans C.L."/>
            <person name="Satterwhite D.J."/>
            <person name="Stoltzman C.A."/>
            <person name="Breen K.T."/>
            <person name="Ayer D.E."/>
        </authorList>
    </citation>
    <scope>FUNCTION</scope>
</reference>
<reference key="8">
    <citation type="journal article" date="2013" name="J. Proteome Res.">
        <title>Toward a comprehensive characterization of a human cancer cell phosphoproteome.</title>
        <authorList>
            <person name="Zhou H."/>
            <person name="Di Palma S."/>
            <person name="Preisinger C."/>
            <person name="Peng M."/>
            <person name="Polat A.N."/>
            <person name="Heck A.J."/>
            <person name="Mohammed S."/>
        </authorList>
    </citation>
    <scope>PHOSPHORYLATION [LARGE SCALE ANALYSIS] AT SER-7; SER-77 AND SER-98</scope>
    <scope>IDENTIFICATION BY MASS SPECTROMETRY [LARGE SCALE ANALYSIS]</scope>
    <source>
        <tissue>Erythroleukemia</tissue>
    </source>
</reference>
<reference key="9">
    <citation type="journal article" date="2014" name="J. Proteomics">
        <title>An enzyme assisted RP-RPLC approach for in-depth analysis of human liver phosphoproteome.</title>
        <authorList>
            <person name="Bian Y."/>
            <person name="Song C."/>
            <person name="Cheng K."/>
            <person name="Dong M."/>
            <person name="Wang F."/>
            <person name="Huang J."/>
            <person name="Sun D."/>
            <person name="Wang L."/>
            <person name="Ye M."/>
            <person name="Zou H."/>
        </authorList>
    </citation>
    <scope>PHOSPHORYLATION [LARGE SCALE ANALYSIS] AT SER-74</scope>
    <scope>IDENTIFICATION BY MASS SPECTROMETRY [LARGE SCALE ANALYSIS]</scope>
    <source>
        <tissue>Liver</tissue>
    </source>
</reference>
<feature type="chain" id="PRO_0000127279" description="Max-like protein X">
    <location>
        <begin position="1"/>
        <end position="298"/>
    </location>
</feature>
<feature type="domain" description="bHLH" evidence="2">
    <location>
        <begin position="129"/>
        <end position="187"/>
    </location>
</feature>
<feature type="region of interest" description="Disordered" evidence="3">
    <location>
        <begin position="1"/>
        <end position="63"/>
    </location>
</feature>
<feature type="region of interest" description="Disordered" evidence="3">
    <location>
        <begin position="91"/>
        <end position="145"/>
    </location>
</feature>
<feature type="region of interest" description="Leucine-zipper">
    <location>
        <begin position="140"/>
        <end position="160"/>
    </location>
</feature>
<feature type="compositionally biased region" description="Basic residues" evidence="3">
    <location>
        <begin position="28"/>
        <end position="37"/>
    </location>
</feature>
<feature type="compositionally biased region" description="Polar residues" evidence="3">
    <location>
        <begin position="94"/>
        <end position="109"/>
    </location>
</feature>
<feature type="compositionally biased region" description="Basic and acidic residues" evidence="3">
    <location>
        <begin position="116"/>
        <end position="127"/>
    </location>
</feature>
<feature type="compositionally biased region" description="Basic and acidic residues" evidence="3">
    <location>
        <begin position="135"/>
        <end position="145"/>
    </location>
</feature>
<feature type="modified residue" description="Phosphoserine" evidence="14">
    <location>
        <position position="7"/>
    </location>
</feature>
<feature type="modified residue" description="Phosphoserine" evidence="1">
    <location>
        <position position="45"/>
    </location>
</feature>
<feature type="modified residue" description="Phosphoserine" evidence="1">
    <location>
        <position position="48"/>
    </location>
</feature>
<feature type="modified residue" description="Phosphoserine" evidence="15">
    <location>
        <position position="74"/>
    </location>
</feature>
<feature type="modified residue" description="Phosphoserine" evidence="14">
    <location>
        <position position="77"/>
    </location>
</feature>
<feature type="modified residue" description="Phosphoserine" evidence="14">
    <location>
        <position position="98"/>
    </location>
</feature>
<feature type="splice variant" id="VSP_002137" description="In isoform Alpha and isoform Beta." evidence="8 9 10 11 12">
    <location>
        <begin position="15"/>
        <end position="68"/>
    </location>
</feature>
<feature type="splice variant" id="VSP_002138" description="In isoform Alpha." evidence="9 10">
    <location>
        <begin position="81"/>
        <end position="110"/>
    </location>
</feature>
<feature type="sequence variant" id="VAR_049547" description="In dbSNP:rs665268.">
    <original>Q</original>
    <variation>R</variation>
    <location>
        <position position="223"/>
    </location>
</feature>
<feature type="sequence conflict" description="In Ref. 1; AAF14638." evidence="13" ref="1">
    <original>D</original>
    <variation>V</variation>
    <location>
        <position position="247"/>
    </location>
</feature>
<feature type="sequence conflict" description="In Ref. 3; BAA90977." evidence="13" ref="3">
    <original>Y</original>
    <variation>C</variation>
    <location>
        <position position="298"/>
    </location>
</feature>
<comment type="function">
    <text evidence="4 6 7">Transcription regulator. Forms a sequence-specific DNA-binding protein complex with MAD1, MAD4, MNT, WBSCR14 and MLXIP which recognizes the core sequence 5'-CACGTG-3'. The TCFL4-MAD1, TCFL4-MAD4, TCFL4-WBSCR14 complexes are transcriptional repressors. Plays a role in transcriptional activation of glycolytic target genes. Involved in glucose-responsive gene regulation.</text>
</comment>
<comment type="subunit">
    <text evidence="4">Efficient DNA binding requires dimerization with another bHLH protein. Binds DNA as a heterodimer with MAD1, MAD4, MNT, WBSCR14 and MLXIP. Can also bind DNA as a homodimer.</text>
</comment>
<comment type="interaction">
    <interactant intactId="EBI-741109">
        <id>Q9UH92</id>
    </interactant>
    <interactant intactId="EBI-720116">
        <id>P60520</id>
        <label>GABARAPL2</label>
    </interactant>
    <organismsDiffer>false</organismsDiffer>
    <experiments>5</experiments>
</comment>
<comment type="interaction">
    <interactant intactId="EBI-741109">
        <id>Q9UH92</id>
    </interactant>
    <interactant intactId="EBI-6654703">
        <id>Q14498-3</id>
        <label>RBM39</label>
    </interactant>
    <organismsDiffer>false</organismsDiffer>
    <experiments>3</experiments>
</comment>
<comment type="interaction">
    <interactant intactId="EBI-741109">
        <id>Q9UH92</id>
    </interactant>
    <interactant intactId="EBI-717810">
        <id>Q08117</id>
        <label>TLE5</label>
    </interactant>
    <organismsDiffer>false</organismsDiffer>
    <experiments>4</experiments>
</comment>
<comment type="interaction">
    <interactant intactId="EBI-741109">
        <id>Q9UH92</id>
    </interactant>
    <interactant intactId="EBI-10188476">
        <id>A0A0C4DGF1</id>
        <label>ZBTB32</label>
    </interactant>
    <organismsDiffer>false</organismsDiffer>
    <experiments>3</experiments>
</comment>
<comment type="interaction">
    <interactant intactId="EBI-741109">
        <id>Q9UH92</id>
    </interactant>
    <interactant intactId="EBI-9675545">
        <id>Q2Q067</id>
        <label>HBZ</label>
    </interactant>
    <organismsDiffer>true</organismsDiffer>
    <experiments>3</experiments>
</comment>
<comment type="interaction">
    <interactant intactId="EBI-8852072">
        <id>Q9UH92-3</id>
    </interactant>
    <interactant intactId="EBI-1642333">
        <id>Q9BYV9</id>
        <label>BACH2</label>
    </interactant>
    <organismsDiffer>false</organismsDiffer>
    <experiments>3</experiments>
</comment>
<comment type="interaction">
    <interactant intactId="EBI-8852072">
        <id>Q9UH92-3</id>
    </interactant>
    <interactant intactId="EBI-10181188">
        <id>Q8N7W2-2</id>
        <label>BEND7</label>
    </interactant>
    <organismsDiffer>false</organismsDiffer>
    <experiments>3</experiments>
</comment>
<comment type="interaction">
    <interactant intactId="EBI-8852072">
        <id>Q9UH92-3</id>
    </interactant>
    <interactant intactId="EBI-12007726">
        <id>O14936-4</id>
        <label>CASK</label>
    </interactant>
    <organismsDiffer>false</organismsDiffer>
    <experiments>3</experiments>
</comment>
<comment type="interaction">
    <interactant intactId="EBI-8852072">
        <id>Q9UH92-3</id>
    </interactant>
    <interactant intactId="EBI-742054">
        <id>Q96D03</id>
        <label>DDIT4L</label>
    </interactant>
    <organismsDiffer>false</organismsDiffer>
    <experiments>3</experiments>
</comment>
<comment type="interaction">
    <interactant intactId="EBI-8852072">
        <id>Q9UH92-3</id>
    </interactant>
    <interactant intactId="EBI-746969">
        <id>Q9H0R8</id>
        <label>GABARAPL1</label>
    </interactant>
    <organismsDiffer>false</organismsDiffer>
    <experiments>3</experiments>
</comment>
<comment type="interaction">
    <interactant intactId="EBI-8852072">
        <id>Q9UH92-3</id>
    </interactant>
    <interactant intactId="EBI-720116">
        <id>P60520</id>
        <label>GABARAPL2</label>
    </interactant>
    <organismsDiffer>false</organismsDiffer>
    <experiments>3</experiments>
</comment>
<comment type="interaction">
    <interactant intactId="EBI-8852072">
        <id>Q9UH92-3</id>
    </interactant>
    <interactant intactId="EBI-10241252">
        <id>Q3SY46</id>
        <label>KRTAP13-3</label>
    </interactant>
    <organismsDiffer>false</organismsDiffer>
    <experiments>3</experiments>
</comment>
<comment type="interaction">
    <interactant intactId="EBI-8852072">
        <id>Q9UH92-3</id>
    </interactant>
    <interactant intactId="EBI-739832">
        <id>Q8TBB1</id>
        <label>LNX1</label>
    </interactant>
    <organismsDiffer>false</organismsDiffer>
    <experiments>3</experiments>
</comment>
<comment type="interaction">
    <interactant intactId="EBI-8852072">
        <id>Q9UH92-3</id>
    </interactant>
    <interactant intactId="EBI-19944212">
        <id>A8MW99</id>
        <label>MEI4</label>
    </interactant>
    <organismsDiffer>false</organismsDiffer>
    <experiments>3</experiments>
</comment>
<comment type="interaction">
    <interactant intactId="EBI-8852072">
        <id>Q9UH92-3</id>
    </interactant>
    <interactant intactId="EBI-2864512">
        <id>P50221</id>
        <label>MEOX1</label>
    </interactant>
    <organismsDiffer>false</organismsDiffer>
    <experiments>3</experiments>
</comment>
<comment type="interaction">
    <interactant intactId="EBI-8852072">
        <id>Q9UH92-3</id>
    </interactant>
    <interactant intactId="EBI-16439278">
        <id>Q6FHY5</id>
        <label>MEOX2</label>
    </interactant>
    <organismsDiffer>false</organismsDiffer>
    <experiments>3</experiments>
</comment>
<comment type="interaction">
    <interactant intactId="EBI-8852072">
        <id>Q9UH92-3</id>
    </interactant>
    <interactant intactId="EBI-348567">
        <id>O75928-2</id>
        <label>PIAS2</label>
    </interactant>
    <organismsDiffer>false</organismsDiffer>
    <experiments>3</experiments>
</comment>
<comment type="interaction">
    <interactant intactId="EBI-8852072">
        <id>Q9UH92-3</id>
    </interactant>
    <interactant intactId="EBI-17589229">
        <id>Q6NTF9-3</id>
        <label>RHBDD2</label>
    </interactant>
    <organismsDiffer>false</organismsDiffer>
    <experiments>3</experiments>
</comment>
<comment type="interaction">
    <interactant intactId="EBI-8852072">
        <id>Q9UH92-3</id>
    </interactant>
    <interactant intactId="EBI-11139477">
        <id>Q96N21</id>
        <label>TEPSIN</label>
    </interactant>
    <organismsDiffer>false</organismsDiffer>
    <experiments>3</experiments>
</comment>
<comment type="interaction">
    <interactant intactId="EBI-8852072">
        <id>Q9UH92-3</id>
    </interactant>
    <interactant intactId="EBI-11741437">
        <id>Q08117-2</id>
        <label>TLE5</label>
    </interactant>
    <organismsDiffer>false</organismsDiffer>
    <experiments>3</experiments>
</comment>
<comment type="interaction">
    <interactant intactId="EBI-8852072">
        <id>Q9UH92-3</id>
    </interactant>
    <interactant intactId="EBI-17559309">
        <id>P45379-11</id>
        <label>TNNT2</label>
    </interactant>
    <organismsDiffer>false</organismsDiffer>
    <experiments>3</experiments>
</comment>
<comment type="interaction">
    <interactant intactId="EBI-8852072">
        <id>Q9UH92-3</id>
    </interactant>
    <interactant intactId="EBI-10180829">
        <id>Q7KZS0</id>
        <label>UBE2I</label>
    </interactant>
    <organismsDiffer>false</organismsDiffer>
    <experiments>3</experiments>
</comment>
<comment type="interaction">
    <interactant intactId="EBI-8852072">
        <id>Q9UH92-3</id>
    </interactant>
    <interactant intactId="EBI-4395669">
        <id>Q6ZNG0</id>
        <label>ZNF620</label>
    </interactant>
    <organismsDiffer>false</organismsDiffer>
    <experiments>3</experiments>
</comment>
<comment type="subcellular location">
    <molecule>Isoform Alpha</molecule>
    <subcellularLocation>
        <location evidence="5">Cytoplasm</location>
    </subcellularLocation>
    <text evidence="5">Found predominantly in the cytoplasm (PubMed:10918583).</text>
</comment>
<comment type="subcellular location">
    <molecule>Isoform Beta</molecule>
    <subcellularLocation>
        <location evidence="5">Cytoplasm</location>
    </subcellularLocation>
    <text evidence="5">Found predominantly in the cytoplasm (PubMed:10918583).</text>
</comment>
<comment type="subcellular location">
    <molecule>Isoform Gamma</molecule>
    <subcellularLocation>
        <location evidence="5">Nucleus</location>
    </subcellularLocation>
    <text evidence="5">Found predominantly in the nucleus (PubMed:10918583).</text>
</comment>
<comment type="alternative products">
    <event type="alternative splicing"/>
    <isoform>
        <id>Q9UH92-1</id>
        <name>Gamma</name>
        <sequence type="displayed"/>
    </isoform>
    <isoform>
        <id>Q9UH92-2</id>
        <name>Alpha</name>
        <sequence type="described" ref="VSP_002137 VSP_002138"/>
    </isoform>
    <isoform>
        <id>Q9UH92-3</id>
        <name>Beta</name>
        <sequence type="described" ref="VSP_002137"/>
    </isoform>
</comment>
<comment type="tissue specificity">
    <text evidence="4">Expressed in all tissues tested, including spleen, thymus, prostate, ovary, intestine, colon, peripheral blood leukocyte, heart, liver, skeletal muscle and kidney. Lower levels of expression in testis, brain, placenta and lung.</text>
</comment>
<organism>
    <name type="scientific">Homo sapiens</name>
    <name type="common">Human</name>
    <dbReference type="NCBI Taxonomy" id="9606"/>
    <lineage>
        <taxon>Eukaryota</taxon>
        <taxon>Metazoa</taxon>
        <taxon>Chordata</taxon>
        <taxon>Craniata</taxon>
        <taxon>Vertebrata</taxon>
        <taxon>Euteleostomi</taxon>
        <taxon>Mammalia</taxon>
        <taxon>Eutheria</taxon>
        <taxon>Euarchontoglires</taxon>
        <taxon>Primates</taxon>
        <taxon>Haplorrhini</taxon>
        <taxon>Catarrhini</taxon>
        <taxon>Hominidae</taxon>
        <taxon>Homo</taxon>
    </lineage>
</organism>
<protein>
    <recommendedName>
        <fullName>Max-like protein X</fullName>
    </recommendedName>
    <alternativeName>
        <fullName>Class D basic helix-loop-helix protein 13</fullName>
        <shortName>bHLHd13</shortName>
    </alternativeName>
    <alternativeName>
        <fullName>Max-like bHLHZip protein</fullName>
    </alternativeName>
    <alternativeName>
        <fullName>Protein BigMax</fullName>
    </alternativeName>
    <alternativeName>
        <fullName>Transcription factor-like protein 4</fullName>
    </alternativeName>
</protein>
<accession>Q9UH92</accession>
<accession>A8K2J3</accession>
<accession>B2RAV8</accession>
<accession>B2RD73</accession>
<accession>Q53XM6</accession>
<accession>Q96FL2</accession>
<accession>Q9H2V0</accession>
<accession>Q9H2V1</accession>
<accession>Q9H2V2</accession>
<accession>Q9NXN3</accession>
<proteinExistence type="evidence at protein level"/>
<evidence type="ECO:0000250" key="1">
    <source>
        <dbReference type="UniProtKB" id="O08609"/>
    </source>
</evidence>
<evidence type="ECO:0000255" key="2">
    <source>
        <dbReference type="PROSITE-ProRule" id="PRU00981"/>
    </source>
</evidence>
<evidence type="ECO:0000256" key="3">
    <source>
        <dbReference type="SAM" id="MobiDB-lite"/>
    </source>
</evidence>
<evidence type="ECO:0000269" key="4">
    <source>
    </source>
</evidence>
<evidence type="ECO:0000269" key="5">
    <source>
    </source>
</evidence>
<evidence type="ECO:0000269" key="6">
    <source>
    </source>
</evidence>
<evidence type="ECO:0000269" key="7">
    <source>
    </source>
</evidence>
<evidence type="ECO:0000303" key="8">
    <source>
    </source>
</evidence>
<evidence type="ECO:0000303" key="9">
    <source>
    </source>
</evidence>
<evidence type="ECO:0000303" key="10">
    <source>
    </source>
</evidence>
<evidence type="ECO:0000303" key="11">
    <source>
    </source>
</evidence>
<evidence type="ECO:0000303" key="12">
    <source ref="4"/>
</evidence>
<evidence type="ECO:0000305" key="13"/>
<evidence type="ECO:0007744" key="14">
    <source>
    </source>
</evidence>
<evidence type="ECO:0007744" key="15">
    <source>
    </source>
</evidence>
<gene>
    <name type="primary">MLX</name>
    <name type="synonym">BHLHD13</name>
    <name type="synonym">TCFL4</name>
</gene>
<dbReference type="EMBL" id="AF203978">
    <property type="protein sequence ID" value="AAF14638.1"/>
    <property type="molecule type" value="mRNA"/>
</dbReference>
<dbReference type="EMBL" id="AF213666">
    <property type="protein sequence ID" value="AAG40145.1"/>
    <property type="molecule type" value="mRNA"/>
</dbReference>
<dbReference type="EMBL" id="AF213667">
    <property type="protein sequence ID" value="AAG40146.1"/>
    <property type="molecule type" value="mRNA"/>
</dbReference>
<dbReference type="EMBL" id="AF213668">
    <property type="protein sequence ID" value="AAG40147.1"/>
    <property type="molecule type" value="mRNA"/>
</dbReference>
<dbReference type="EMBL" id="AK000150">
    <property type="protein sequence ID" value="BAA90977.1"/>
    <property type="molecule type" value="mRNA"/>
</dbReference>
<dbReference type="EMBL" id="AK290258">
    <property type="protein sequence ID" value="BAF82947.1"/>
    <property type="molecule type" value="mRNA"/>
</dbReference>
<dbReference type="EMBL" id="AK314378">
    <property type="protein sequence ID" value="BAG37005.1"/>
    <property type="molecule type" value="mRNA"/>
</dbReference>
<dbReference type="EMBL" id="AK315432">
    <property type="protein sequence ID" value="BAG37820.1"/>
    <property type="molecule type" value="mRNA"/>
</dbReference>
<dbReference type="EMBL" id="BT009812">
    <property type="protein sequence ID" value="AAP88814.1"/>
    <property type="molecule type" value="mRNA"/>
</dbReference>
<dbReference type="EMBL" id="BC010689">
    <property type="protein sequence ID" value="AAH10689.1"/>
    <property type="molecule type" value="mRNA"/>
</dbReference>
<dbReference type="CCDS" id="CCDS11430.1">
    <molecule id="Q9UH92-1"/>
</dbReference>
<dbReference type="CCDS" id="CCDS42341.1">
    <molecule id="Q9UH92-2"/>
</dbReference>
<dbReference type="CCDS" id="CCDS45687.1">
    <molecule id="Q9UH92-3"/>
</dbReference>
<dbReference type="PIR" id="JC5333">
    <property type="entry name" value="JC5333"/>
</dbReference>
<dbReference type="RefSeq" id="NP_733752.1">
    <molecule id="Q9UH92-1"/>
    <property type="nucleotide sequence ID" value="NM_170607.3"/>
</dbReference>
<dbReference type="RefSeq" id="NP_937847.1">
    <molecule id="Q9UH92-3"/>
    <property type="nucleotide sequence ID" value="NM_198204.2"/>
</dbReference>
<dbReference type="RefSeq" id="NP_937848.1">
    <molecule id="Q9UH92-2"/>
    <property type="nucleotide sequence ID" value="NM_198205.2"/>
</dbReference>
<dbReference type="SMR" id="Q9UH92"/>
<dbReference type="BioGRID" id="112805">
    <property type="interactions" value="63"/>
</dbReference>
<dbReference type="ComplexPortal" id="CPX-2519">
    <property type="entry name" value="MXD1-MLX transcriptional repressor complex"/>
</dbReference>
<dbReference type="ComplexPortal" id="CPX-2520">
    <property type="entry name" value="MXD4-MLX transcriptional repressor complex"/>
</dbReference>
<dbReference type="ComplexPortal" id="CPX-2521">
    <property type="entry name" value="MNT-MLX transcriptional repressor complex"/>
</dbReference>
<dbReference type="ComplexPortal" id="CPX-2525">
    <property type="entry name" value="MLXIP-MLX transcription factor complex"/>
</dbReference>
<dbReference type="ComplexPortal" id="CPX-2530">
    <property type="entry name" value="MLXIPL-MLX transcription factor complex"/>
</dbReference>
<dbReference type="FunCoup" id="Q9UH92">
    <property type="interactions" value="1872"/>
</dbReference>
<dbReference type="IntAct" id="Q9UH92">
    <property type="interactions" value="43"/>
</dbReference>
<dbReference type="MINT" id="Q9UH92"/>
<dbReference type="STRING" id="9606.ENSP00000246912"/>
<dbReference type="BindingDB" id="Q9UH92"/>
<dbReference type="ChEMBL" id="CHEMBL2062357"/>
<dbReference type="iPTMnet" id="Q9UH92"/>
<dbReference type="PhosphoSitePlus" id="Q9UH92"/>
<dbReference type="BioMuta" id="MLX"/>
<dbReference type="DMDM" id="20138856"/>
<dbReference type="jPOST" id="Q9UH92"/>
<dbReference type="MassIVE" id="Q9UH92"/>
<dbReference type="PaxDb" id="9606-ENSP00000246912"/>
<dbReference type="PeptideAtlas" id="Q9UH92"/>
<dbReference type="ProteomicsDB" id="84286">
    <molecule id="Q9UH92-1"/>
</dbReference>
<dbReference type="ProteomicsDB" id="84287">
    <molecule id="Q9UH92-2"/>
</dbReference>
<dbReference type="ProteomicsDB" id="84288">
    <molecule id="Q9UH92-3"/>
</dbReference>
<dbReference type="Pumba" id="Q9UH92"/>
<dbReference type="Antibodypedia" id="29285">
    <property type="antibodies" value="353 antibodies from 36 providers"/>
</dbReference>
<dbReference type="DNASU" id="6945"/>
<dbReference type="Ensembl" id="ENST00000246912.8">
    <molecule id="Q9UH92-1"/>
    <property type="protein sequence ID" value="ENSP00000246912.3"/>
    <property type="gene ID" value="ENSG00000108788.12"/>
</dbReference>
<dbReference type="Ensembl" id="ENST00000346833.8">
    <molecule id="Q9UH92-2"/>
    <property type="protein sequence ID" value="ENSP00000320913.3"/>
    <property type="gene ID" value="ENSG00000108788.12"/>
</dbReference>
<dbReference type="Ensembl" id="ENST00000435881.7">
    <molecule id="Q9UH92-3"/>
    <property type="protein sequence ID" value="ENSP00000416627.1"/>
    <property type="gene ID" value="ENSG00000108788.12"/>
</dbReference>
<dbReference type="GeneID" id="6945"/>
<dbReference type="KEGG" id="hsa:6945"/>
<dbReference type="MANE-Select" id="ENST00000435881.7">
    <molecule id="Q9UH92-3"/>
    <property type="protein sequence ID" value="ENSP00000416627.1"/>
    <property type="RefSeq nucleotide sequence ID" value="NM_198204.2"/>
    <property type="RefSeq protein sequence ID" value="NP_937847.1"/>
</dbReference>
<dbReference type="UCSC" id="uc002iaf.4">
    <molecule id="Q9UH92-1"/>
    <property type="organism name" value="human"/>
</dbReference>
<dbReference type="AGR" id="HGNC:11645"/>
<dbReference type="CTD" id="6945"/>
<dbReference type="DisGeNET" id="6945"/>
<dbReference type="GeneCards" id="MLX"/>
<dbReference type="HGNC" id="HGNC:11645">
    <property type="gene designation" value="MLX"/>
</dbReference>
<dbReference type="HPA" id="ENSG00000108788">
    <property type="expression patterns" value="Low tissue specificity"/>
</dbReference>
<dbReference type="MalaCards" id="MLX"/>
<dbReference type="MIM" id="602976">
    <property type="type" value="gene"/>
</dbReference>
<dbReference type="neXtProt" id="NX_Q9UH92"/>
<dbReference type="OpenTargets" id="ENSG00000108788"/>
<dbReference type="Orphanet" id="3287">
    <property type="disease" value="Takayasu arteritis"/>
</dbReference>
<dbReference type="PharmGKB" id="PA36397"/>
<dbReference type="VEuPathDB" id="HostDB:ENSG00000108788"/>
<dbReference type="eggNOG" id="KOG1319">
    <property type="taxonomic scope" value="Eukaryota"/>
</dbReference>
<dbReference type="GeneTree" id="ENSGT00940000157377"/>
<dbReference type="HOGENOM" id="CLU_083204_0_0_1"/>
<dbReference type="InParanoid" id="Q9UH92"/>
<dbReference type="OMA" id="GYETMLQ"/>
<dbReference type="OrthoDB" id="5778525at2759"/>
<dbReference type="PAN-GO" id="Q9UH92">
    <property type="GO annotations" value="4 GO annotations based on evolutionary models"/>
</dbReference>
<dbReference type="PhylomeDB" id="Q9UH92"/>
<dbReference type="TreeFam" id="TF318841"/>
<dbReference type="PathwayCommons" id="Q9UH92"/>
<dbReference type="Reactome" id="R-HSA-163765">
    <property type="pathway name" value="ChREBP activates metabolic gene expression"/>
</dbReference>
<dbReference type="SignaLink" id="Q9UH92"/>
<dbReference type="BioGRID-ORCS" id="6945">
    <property type="hits" value="95 hits in 1186 CRISPR screens"/>
</dbReference>
<dbReference type="ChiTaRS" id="MLX">
    <property type="organism name" value="human"/>
</dbReference>
<dbReference type="GeneWiki" id="MLX_(gene)"/>
<dbReference type="GenomeRNAi" id="6945"/>
<dbReference type="Pharos" id="Q9UH92">
    <property type="development level" value="Tchem"/>
</dbReference>
<dbReference type="PRO" id="PR:Q9UH92"/>
<dbReference type="Proteomes" id="UP000005640">
    <property type="component" value="Chromosome 17"/>
</dbReference>
<dbReference type="RNAct" id="Q9UH92">
    <property type="molecule type" value="protein"/>
</dbReference>
<dbReference type="Bgee" id="ENSG00000108788">
    <property type="expression patterns" value="Expressed in oocyte and 210 other cell types or tissues"/>
</dbReference>
<dbReference type="ExpressionAtlas" id="Q9UH92">
    <property type="expression patterns" value="baseline and differential"/>
</dbReference>
<dbReference type="GO" id="GO:0000785">
    <property type="term" value="C:chromatin"/>
    <property type="evidence" value="ECO:0000247"/>
    <property type="project" value="NTNU_SB"/>
</dbReference>
<dbReference type="GO" id="GO:0005737">
    <property type="term" value="C:cytoplasm"/>
    <property type="evidence" value="ECO:0000314"/>
    <property type="project" value="UniProtKB"/>
</dbReference>
<dbReference type="GO" id="GO:0005829">
    <property type="term" value="C:cytosol"/>
    <property type="evidence" value="ECO:0000314"/>
    <property type="project" value="HPA"/>
</dbReference>
<dbReference type="GO" id="GO:0031965">
    <property type="term" value="C:nuclear membrane"/>
    <property type="evidence" value="ECO:0000314"/>
    <property type="project" value="HPA"/>
</dbReference>
<dbReference type="GO" id="GO:0005654">
    <property type="term" value="C:nucleoplasm"/>
    <property type="evidence" value="ECO:0000314"/>
    <property type="project" value="HPA"/>
</dbReference>
<dbReference type="GO" id="GO:0005634">
    <property type="term" value="C:nucleus"/>
    <property type="evidence" value="ECO:0000314"/>
    <property type="project" value="UniProtKB"/>
</dbReference>
<dbReference type="GO" id="GO:0003677">
    <property type="term" value="F:DNA binding"/>
    <property type="evidence" value="ECO:0000314"/>
    <property type="project" value="BHF-UCL"/>
</dbReference>
<dbReference type="GO" id="GO:0003700">
    <property type="term" value="F:DNA-binding transcription factor activity"/>
    <property type="evidence" value="ECO:0000303"/>
    <property type="project" value="UniProtKB"/>
</dbReference>
<dbReference type="GO" id="GO:0000981">
    <property type="term" value="F:DNA-binding transcription factor activity, RNA polymerase II-specific"/>
    <property type="evidence" value="ECO:0000247"/>
    <property type="project" value="NTNU_SB"/>
</dbReference>
<dbReference type="GO" id="GO:0001227">
    <property type="term" value="F:DNA-binding transcription repressor activity, RNA polymerase II-specific"/>
    <property type="evidence" value="ECO:0000314"/>
    <property type="project" value="NTNU_SB"/>
</dbReference>
<dbReference type="GO" id="GO:0046982">
    <property type="term" value="F:protein heterodimerization activity"/>
    <property type="evidence" value="ECO:0000353"/>
    <property type="project" value="BHF-UCL"/>
</dbReference>
<dbReference type="GO" id="GO:0042803">
    <property type="term" value="F:protein homodimerization activity"/>
    <property type="evidence" value="ECO:0000353"/>
    <property type="project" value="BHF-UCL"/>
</dbReference>
<dbReference type="GO" id="GO:0000978">
    <property type="term" value="F:RNA polymerase II cis-regulatory region sequence-specific DNA binding"/>
    <property type="evidence" value="ECO:0000318"/>
    <property type="project" value="GO_Central"/>
</dbReference>
<dbReference type="GO" id="GO:0000977">
    <property type="term" value="F:RNA polymerase II transcription regulatory region sequence-specific DNA binding"/>
    <property type="evidence" value="ECO:0000314"/>
    <property type="project" value="NTNU_SB"/>
</dbReference>
<dbReference type="GO" id="GO:0061629">
    <property type="term" value="F:RNA polymerase II-specific DNA-binding transcription factor binding"/>
    <property type="evidence" value="ECO:0000353"/>
    <property type="project" value="BHF-UCL"/>
</dbReference>
<dbReference type="GO" id="GO:1990837">
    <property type="term" value="F:sequence-specific double-stranded DNA binding"/>
    <property type="evidence" value="ECO:0000314"/>
    <property type="project" value="ARUK-UCL"/>
</dbReference>
<dbReference type="GO" id="GO:0045892">
    <property type="term" value="P:negative regulation of DNA-templated transcription"/>
    <property type="evidence" value="ECO:0000314"/>
    <property type="project" value="BHF-UCL"/>
</dbReference>
<dbReference type="GO" id="GO:0000122">
    <property type="term" value="P:negative regulation of transcription by RNA polymerase II"/>
    <property type="evidence" value="ECO:0000315"/>
    <property type="project" value="NTNU_SB"/>
</dbReference>
<dbReference type="GO" id="GO:0045944">
    <property type="term" value="P:positive regulation of transcription by RNA polymerase II"/>
    <property type="evidence" value="ECO:0000314"/>
    <property type="project" value="NTNU_SB"/>
</dbReference>
<dbReference type="GO" id="GO:0006355">
    <property type="term" value="P:regulation of DNA-templated transcription"/>
    <property type="evidence" value="ECO:0000303"/>
    <property type="project" value="UniProtKB"/>
</dbReference>
<dbReference type="GO" id="GO:0006357">
    <property type="term" value="P:regulation of transcription by RNA polymerase II"/>
    <property type="evidence" value="ECO:0000318"/>
    <property type="project" value="GO_Central"/>
</dbReference>
<dbReference type="CDD" id="cd19687">
    <property type="entry name" value="bHLHzip_Mlx"/>
    <property type="match status" value="1"/>
</dbReference>
<dbReference type="FunFam" id="4.10.280.10:FF:000037">
    <property type="entry name" value="max-like protein X isoform X2"/>
    <property type="match status" value="1"/>
</dbReference>
<dbReference type="Gene3D" id="4.10.280.10">
    <property type="entry name" value="Helix-loop-helix DNA-binding domain"/>
    <property type="match status" value="1"/>
</dbReference>
<dbReference type="InterPro" id="IPR011598">
    <property type="entry name" value="bHLH_dom"/>
</dbReference>
<dbReference type="InterPro" id="IPR036638">
    <property type="entry name" value="HLH_DNA-bd_sf"/>
</dbReference>
<dbReference type="InterPro" id="IPR052207">
    <property type="entry name" value="Max-like/E-box_TFs"/>
</dbReference>
<dbReference type="PANTHER" id="PTHR15741">
    <property type="entry name" value="BASIC HELIX-LOOP-HELIX ZIP TRANSCRIPTION FACTOR"/>
    <property type="match status" value="1"/>
</dbReference>
<dbReference type="PANTHER" id="PTHR15741:SF25">
    <property type="entry name" value="MAX-LIKE PROTEIN X"/>
    <property type="match status" value="1"/>
</dbReference>
<dbReference type="Pfam" id="PF00010">
    <property type="entry name" value="HLH"/>
    <property type="match status" value="1"/>
</dbReference>
<dbReference type="SMART" id="SM00353">
    <property type="entry name" value="HLH"/>
    <property type="match status" value="1"/>
</dbReference>
<dbReference type="SUPFAM" id="SSF47459">
    <property type="entry name" value="HLH, helix-loop-helix DNA-binding domain"/>
    <property type="match status" value="1"/>
</dbReference>
<dbReference type="PROSITE" id="PS50888">
    <property type="entry name" value="BHLH"/>
    <property type="match status" value="1"/>
</dbReference>